<gene>
    <name type="ordered locus">At1g75220</name>
    <name type="ORF">F22H5.6</name>
</gene>
<protein>
    <recommendedName>
        <fullName>Sugar transporter ERD6-like 6</fullName>
    </recommendedName>
</protein>
<accession>Q9FRL3</accession>
<organism>
    <name type="scientific">Arabidopsis thaliana</name>
    <name type="common">Mouse-ear cress</name>
    <dbReference type="NCBI Taxonomy" id="3702"/>
    <lineage>
        <taxon>Eukaryota</taxon>
        <taxon>Viridiplantae</taxon>
        <taxon>Streptophyta</taxon>
        <taxon>Embryophyta</taxon>
        <taxon>Tracheophyta</taxon>
        <taxon>Spermatophyta</taxon>
        <taxon>Magnoliopsida</taxon>
        <taxon>eudicotyledons</taxon>
        <taxon>Gunneridae</taxon>
        <taxon>Pentapetalae</taxon>
        <taxon>rosids</taxon>
        <taxon>malvids</taxon>
        <taxon>Brassicales</taxon>
        <taxon>Brassicaceae</taxon>
        <taxon>Camelineae</taxon>
        <taxon>Arabidopsis</taxon>
    </lineage>
</organism>
<proteinExistence type="evidence at protein level"/>
<evidence type="ECO:0000250" key="1"/>
<evidence type="ECO:0000255" key="2"/>
<evidence type="ECO:0000305" key="3"/>
<evidence type="ECO:0007744" key="4">
    <source>
    </source>
</evidence>
<reference key="1">
    <citation type="journal article" date="2000" name="Nature">
        <title>Sequence and analysis of chromosome 1 of the plant Arabidopsis thaliana.</title>
        <authorList>
            <person name="Theologis A."/>
            <person name="Ecker J.R."/>
            <person name="Palm C.J."/>
            <person name="Federspiel N.A."/>
            <person name="Kaul S."/>
            <person name="White O."/>
            <person name="Alonso J."/>
            <person name="Altafi H."/>
            <person name="Araujo R."/>
            <person name="Bowman C.L."/>
            <person name="Brooks S.Y."/>
            <person name="Buehler E."/>
            <person name="Chan A."/>
            <person name="Chao Q."/>
            <person name="Chen H."/>
            <person name="Cheuk R.F."/>
            <person name="Chin C.W."/>
            <person name="Chung M.K."/>
            <person name="Conn L."/>
            <person name="Conway A.B."/>
            <person name="Conway A.R."/>
            <person name="Creasy T.H."/>
            <person name="Dewar K."/>
            <person name="Dunn P."/>
            <person name="Etgu P."/>
            <person name="Feldblyum T.V."/>
            <person name="Feng J.-D."/>
            <person name="Fong B."/>
            <person name="Fujii C.Y."/>
            <person name="Gill J.E."/>
            <person name="Goldsmith A.D."/>
            <person name="Haas B."/>
            <person name="Hansen N.F."/>
            <person name="Hughes B."/>
            <person name="Huizar L."/>
            <person name="Hunter J.L."/>
            <person name="Jenkins J."/>
            <person name="Johnson-Hopson C."/>
            <person name="Khan S."/>
            <person name="Khaykin E."/>
            <person name="Kim C.J."/>
            <person name="Koo H.L."/>
            <person name="Kremenetskaia I."/>
            <person name="Kurtz D.B."/>
            <person name="Kwan A."/>
            <person name="Lam B."/>
            <person name="Langin-Hooper S."/>
            <person name="Lee A."/>
            <person name="Lee J.M."/>
            <person name="Lenz C.A."/>
            <person name="Li J.H."/>
            <person name="Li Y.-P."/>
            <person name="Lin X."/>
            <person name="Liu S.X."/>
            <person name="Liu Z.A."/>
            <person name="Luros J.S."/>
            <person name="Maiti R."/>
            <person name="Marziali A."/>
            <person name="Militscher J."/>
            <person name="Miranda M."/>
            <person name="Nguyen M."/>
            <person name="Nierman W.C."/>
            <person name="Osborne B.I."/>
            <person name="Pai G."/>
            <person name="Peterson J."/>
            <person name="Pham P.K."/>
            <person name="Rizzo M."/>
            <person name="Rooney T."/>
            <person name="Rowley D."/>
            <person name="Sakano H."/>
            <person name="Salzberg S.L."/>
            <person name="Schwartz J.R."/>
            <person name="Shinn P."/>
            <person name="Southwick A.M."/>
            <person name="Sun H."/>
            <person name="Tallon L.J."/>
            <person name="Tambunga G."/>
            <person name="Toriumi M.J."/>
            <person name="Town C.D."/>
            <person name="Utterback T."/>
            <person name="Van Aken S."/>
            <person name="Vaysberg M."/>
            <person name="Vysotskaia V.S."/>
            <person name="Walker M."/>
            <person name="Wu D."/>
            <person name="Yu G."/>
            <person name="Fraser C.M."/>
            <person name="Venter J.C."/>
            <person name="Davis R.W."/>
        </authorList>
    </citation>
    <scope>NUCLEOTIDE SEQUENCE [LARGE SCALE GENOMIC DNA]</scope>
    <source>
        <strain>cv. Columbia</strain>
    </source>
</reference>
<reference key="2">
    <citation type="journal article" date="2017" name="Plant J.">
        <title>Araport11: a complete reannotation of the Arabidopsis thaliana reference genome.</title>
        <authorList>
            <person name="Cheng C.Y."/>
            <person name="Krishnakumar V."/>
            <person name="Chan A.P."/>
            <person name="Thibaud-Nissen F."/>
            <person name="Schobel S."/>
            <person name="Town C.D."/>
        </authorList>
    </citation>
    <scope>GENOME REANNOTATION</scope>
    <source>
        <strain>cv. Columbia</strain>
    </source>
</reference>
<reference key="3">
    <citation type="journal article" date="2003" name="Science">
        <title>Empirical analysis of transcriptional activity in the Arabidopsis genome.</title>
        <authorList>
            <person name="Yamada K."/>
            <person name="Lim J."/>
            <person name="Dale J.M."/>
            <person name="Chen H."/>
            <person name="Shinn P."/>
            <person name="Palm C.J."/>
            <person name="Southwick A.M."/>
            <person name="Wu H.C."/>
            <person name="Kim C.J."/>
            <person name="Nguyen M."/>
            <person name="Pham P.K."/>
            <person name="Cheuk R.F."/>
            <person name="Karlin-Newmann G."/>
            <person name="Liu S.X."/>
            <person name="Lam B."/>
            <person name="Sakano H."/>
            <person name="Wu T."/>
            <person name="Yu G."/>
            <person name="Miranda M."/>
            <person name="Quach H.L."/>
            <person name="Tripp M."/>
            <person name="Chang C.H."/>
            <person name="Lee J.M."/>
            <person name="Toriumi M.J."/>
            <person name="Chan M.M."/>
            <person name="Tang C.C."/>
            <person name="Onodera C.S."/>
            <person name="Deng J.M."/>
            <person name="Akiyama K."/>
            <person name="Ansari Y."/>
            <person name="Arakawa T."/>
            <person name="Banh J."/>
            <person name="Banno F."/>
            <person name="Bowser L."/>
            <person name="Brooks S.Y."/>
            <person name="Carninci P."/>
            <person name="Chao Q."/>
            <person name="Choy N."/>
            <person name="Enju A."/>
            <person name="Goldsmith A.D."/>
            <person name="Gurjal M."/>
            <person name="Hansen N.F."/>
            <person name="Hayashizaki Y."/>
            <person name="Johnson-Hopson C."/>
            <person name="Hsuan V.W."/>
            <person name="Iida K."/>
            <person name="Karnes M."/>
            <person name="Khan S."/>
            <person name="Koesema E."/>
            <person name="Ishida J."/>
            <person name="Jiang P.X."/>
            <person name="Jones T."/>
            <person name="Kawai J."/>
            <person name="Kamiya A."/>
            <person name="Meyers C."/>
            <person name="Nakajima M."/>
            <person name="Narusaka M."/>
            <person name="Seki M."/>
            <person name="Sakurai T."/>
            <person name="Satou M."/>
            <person name="Tamse R."/>
            <person name="Vaysberg M."/>
            <person name="Wallender E.K."/>
            <person name="Wong C."/>
            <person name="Yamamura Y."/>
            <person name="Yuan S."/>
            <person name="Shinozaki K."/>
            <person name="Davis R.W."/>
            <person name="Theologis A."/>
            <person name="Ecker J.R."/>
        </authorList>
    </citation>
    <scope>NUCLEOTIDE SEQUENCE [LARGE SCALE MRNA]</scope>
    <source>
        <strain>cv. Columbia</strain>
    </source>
</reference>
<reference key="4">
    <citation type="journal article" date="2006" name="BMC Evol. Biol.">
        <title>The monosaccharide transporter gene family in land plants is ancient and shows differential subfamily expression and expansion across lineages.</title>
        <authorList>
            <person name="Johnson D.A."/>
            <person name="Hill J.P."/>
            <person name="Thomas M.A."/>
        </authorList>
    </citation>
    <scope>GENE FAMILY</scope>
</reference>
<reference key="5">
    <citation type="journal article" date="2012" name="Mol. Cell. Proteomics">
        <title>Comparative large-scale characterisation of plant vs. mammal proteins reveals similar and idiosyncratic N-alpha acetylation features.</title>
        <authorList>
            <person name="Bienvenut W.V."/>
            <person name="Sumpton D."/>
            <person name="Martinez A."/>
            <person name="Lilla S."/>
            <person name="Espagne C."/>
            <person name="Meinnel T."/>
            <person name="Giglione C."/>
        </authorList>
    </citation>
    <scope>ACETYLATION [LARGE SCALE ANALYSIS] AT SER-2</scope>
    <scope>CLEAVAGE OF INITIATOR METHIONINE [LARGE SCALE ANALYSIS]</scope>
    <scope>IDENTIFICATION BY MASS SPECTROMETRY [LARGE SCALE ANALYSIS]</scope>
</reference>
<feature type="initiator methionine" description="Removed" evidence="4">
    <location>
        <position position="1"/>
    </location>
</feature>
<feature type="chain" id="PRO_0000259856" description="Sugar transporter ERD6-like 6">
    <location>
        <begin position="2"/>
        <end position="487"/>
    </location>
</feature>
<feature type="transmembrane region" description="Helical; Name=1" evidence="2">
    <location>
        <begin position="46"/>
        <end position="66"/>
    </location>
</feature>
<feature type="transmembrane region" description="Helical; Name=2" evidence="2">
    <location>
        <begin position="89"/>
        <end position="109"/>
    </location>
</feature>
<feature type="transmembrane region" description="Helical; Name=3" evidence="2">
    <location>
        <begin position="115"/>
        <end position="135"/>
    </location>
</feature>
<feature type="transmembrane region" description="Helical; Name=4" evidence="2">
    <location>
        <begin position="146"/>
        <end position="166"/>
    </location>
</feature>
<feature type="transmembrane region" description="Helical; Name=5" evidence="2">
    <location>
        <begin position="178"/>
        <end position="198"/>
    </location>
</feature>
<feature type="transmembrane region" description="Helical; Name=6" evidence="2">
    <location>
        <begin position="201"/>
        <end position="221"/>
    </location>
</feature>
<feature type="transmembrane region" description="Helical; Name=7" evidence="2">
    <location>
        <begin position="284"/>
        <end position="304"/>
    </location>
</feature>
<feature type="transmembrane region" description="Helical; Name=8" evidence="2">
    <location>
        <begin position="320"/>
        <end position="340"/>
    </location>
</feature>
<feature type="transmembrane region" description="Helical; Name=9" evidence="2">
    <location>
        <begin position="347"/>
        <end position="367"/>
    </location>
</feature>
<feature type="transmembrane region" description="Helical; Name=10" evidence="2">
    <location>
        <begin position="389"/>
        <end position="409"/>
    </location>
</feature>
<feature type="transmembrane region" description="Helical; Name=11" evidence="2">
    <location>
        <begin position="425"/>
        <end position="445"/>
    </location>
</feature>
<feature type="transmembrane region" description="Helical; Name=12" evidence="2">
    <location>
        <begin position="451"/>
        <end position="471"/>
    </location>
</feature>
<feature type="modified residue" description="N-acetylserine" evidence="4">
    <location>
        <position position="2"/>
    </location>
</feature>
<keyword id="KW-0007">Acetylation</keyword>
<keyword id="KW-0472">Membrane</keyword>
<keyword id="KW-1185">Reference proteome</keyword>
<keyword id="KW-0762">Sugar transport</keyword>
<keyword id="KW-0812">Transmembrane</keyword>
<keyword id="KW-1133">Transmembrane helix</keyword>
<keyword id="KW-0813">Transport</keyword>
<name>ERDL6_ARATH</name>
<dbReference type="EMBL" id="AC025814">
    <property type="protein sequence ID" value="AAG12689.1"/>
    <property type="molecule type" value="Genomic_DNA"/>
</dbReference>
<dbReference type="EMBL" id="CP002684">
    <property type="protein sequence ID" value="AEE35689.1"/>
    <property type="molecule type" value="Genomic_DNA"/>
</dbReference>
<dbReference type="EMBL" id="AF412060">
    <property type="protein sequence ID" value="AAL06513.1"/>
    <property type="molecule type" value="mRNA"/>
</dbReference>
<dbReference type="EMBL" id="AY124845">
    <property type="protein sequence ID" value="AAM70554.1"/>
    <property type="molecule type" value="mRNA"/>
</dbReference>
<dbReference type="PIR" id="E96782">
    <property type="entry name" value="E96782"/>
</dbReference>
<dbReference type="RefSeq" id="NP_177658.1">
    <property type="nucleotide sequence ID" value="NM_106178.4"/>
</dbReference>
<dbReference type="SMR" id="Q9FRL3"/>
<dbReference type="BioGRID" id="29078">
    <property type="interactions" value="3"/>
</dbReference>
<dbReference type="FunCoup" id="Q9FRL3">
    <property type="interactions" value="1149"/>
</dbReference>
<dbReference type="IntAct" id="Q9FRL3">
    <property type="interactions" value="4"/>
</dbReference>
<dbReference type="STRING" id="3702.Q9FRL3"/>
<dbReference type="TCDB" id="2.A.1.1.98">
    <property type="family name" value="the major facilitator superfamily (mfs)"/>
</dbReference>
<dbReference type="iPTMnet" id="Q9FRL3"/>
<dbReference type="PaxDb" id="3702-AT1G75220.1"/>
<dbReference type="ProteomicsDB" id="221851"/>
<dbReference type="EnsemblPlants" id="AT1G75220.1">
    <property type="protein sequence ID" value="AT1G75220.1"/>
    <property type="gene ID" value="AT1G75220"/>
</dbReference>
<dbReference type="GeneID" id="843859"/>
<dbReference type="Gramene" id="AT1G75220.1">
    <property type="protein sequence ID" value="AT1G75220.1"/>
    <property type="gene ID" value="AT1G75220"/>
</dbReference>
<dbReference type="KEGG" id="ath:AT1G75220"/>
<dbReference type="Araport" id="AT1G75220"/>
<dbReference type="TAIR" id="AT1G75220">
    <property type="gene designation" value="ERDL6"/>
</dbReference>
<dbReference type="eggNOG" id="KOG0254">
    <property type="taxonomic scope" value="Eukaryota"/>
</dbReference>
<dbReference type="HOGENOM" id="CLU_001265_30_5_1"/>
<dbReference type="InParanoid" id="Q9FRL3"/>
<dbReference type="OMA" id="YWIDYGT"/>
<dbReference type="OrthoDB" id="6612291at2759"/>
<dbReference type="PhylomeDB" id="Q9FRL3"/>
<dbReference type="PRO" id="PR:Q9FRL3"/>
<dbReference type="Proteomes" id="UP000006548">
    <property type="component" value="Chromosome 1"/>
</dbReference>
<dbReference type="ExpressionAtlas" id="Q9FRL3">
    <property type="expression patterns" value="baseline and differential"/>
</dbReference>
<dbReference type="GO" id="GO:0005794">
    <property type="term" value="C:Golgi apparatus"/>
    <property type="evidence" value="ECO:0007005"/>
    <property type="project" value="TAIR"/>
</dbReference>
<dbReference type="GO" id="GO:0005739">
    <property type="term" value="C:mitochondrion"/>
    <property type="evidence" value="ECO:0007005"/>
    <property type="project" value="TAIR"/>
</dbReference>
<dbReference type="GO" id="GO:0000325">
    <property type="term" value="C:plant-type vacuole"/>
    <property type="evidence" value="ECO:0007005"/>
    <property type="project" value="TAIR"/>
</dbReference>
<dbReference type="GO" id="GO:0009705">
    <property type="term" value="C:plant-type vacuole membrane"/>
    <property type="evidence" value="ECO:0000314"/>
    <property type="project" value="TAIR"/>
</dbReference>
<dbReference type="GO" id="GO:0051119">
    <property type="term" value="F:sugar transmembrane transporter activity"/>
    <property type="evidence" value="ECO:0007669"/>
    <property type="project" value="InterPro"/>
</dbReference>
<dbReference type="GO" id="GO:0042593">
    <property type="term" value="P:glucose homeostasis"/>
    <property type="evidence" value="ECO:0000315"/>
    <property type="project" value="TAIR"/>
</dbReference>
<dbReference type="GO" id="GO:0010030">
    <property type="term" value="P:positive regulation of seed germination"/>
    <property type="evidence" value="ECO:0000315"/>
    <property type="project" value="TAIR"/>
</dbReference>
<dbReference type="CDD" id="cd17358">
    <property type="entry name" value="MFS_GLUT6_8_Class3_like"/>
    <property type="match status" value="1"/>
</dbReference>
<dbReference type="FunFam" id="1.20.1250.20:FF:000043">
    <property type="entry name" value="sugar transporter ERD6-like 6"/>
    <property type="match status" value="1"/>
</dbReference>
<dbReference type="Gene3D" id="1.20.1250.20">
    <property type="entry name" value="MFS general substrate transporter like domains"/>
    <property type="match status" value="1"/>
</dbReference>
<dbReference type="InterPro" id="IPR020846">
    <property type="entry name" value="MFS_dom"/>
</dbReference>
<dbReference type="InterPro" id="IPR044775">
    <property type="entry name" value="MFS_ERD6/Tret1-like"/>
</dbReference>
<dbReference type="InterPro" id="IPR005828">
    <property type="entry name" value="MFS_sugar_transport-like"/>
</dbReference>
<dbReference type="InterPro" id="IPR036259">
    <property type="entry name" value="MFS_trans_sf"/>
</dbReference>
<dbReference type="InterPro" id="IPR050549">
    <property type="entry name" value="MFS_Trehalose_Transporter"/>
</dbReference>
<dbReference type="InterPro" id="IPR003663">
    <property type="entry name" value="Sugar/inositol_transpt"/>
</dbReference>
<dbReference type="InterPro" id="IPR005829">
    <property type="entry name" value="Sugar_transporter_CS"/>
</dbReference>
<dbReference type="NCBIfam" id="TIGR00879">
    <property type="entry name" value="SP"/>
    <property type="match status" value="1"/>
</dbReference>
<dbReference type="PANTHER" id="PTHR48021">
    <property type="match status" value="1"/>
</dbReference>
<dbReference type="PANTHER" id="PTHR48021:SF23">
    <property type="entry name" value="SUGAR TRANSPORTER ERD6-LIKE 6"/>
    <property type="match status" value="1"/>
</dbReference>
<dbReference type="Pfam" id="PF00083">
    <property type="entry name" value="Sugar_tr"/>
    <property type="match status" value="1"/>
</dbReference>
<dbReference type="PRINTS" id="PR00171">
    <property type="entry name" value="SUGRTRNSPORT"/>
</dbReference>
<dbReference type="SUPFAM" id="SSF103473">
    <property type="entry name" value="MFS general substrate transporter"/>
    <property type="match status" value="1"/>
</dbReference>
<dbReference type="PROSITE" id="PS50850">
    <property type="entry name" value="MFS"/>
    <property type="match status" value="1"/>
</dbReference>
<dbReference type="PROSITE" id="PS00216">
    <property type="entry name" value="SUGAR_TRANSPORT_1"/>
    <property type="match status" value="1"/>
</dbReference>
<dbReference type="PROSITE" id="PS00217">
    <property type="entry name" value="SUGAR_TRANSPORT_2"/>
    <property type="match status" value="1"/>
</dbReference>
<sequence length="487" mass="52901">MSFRDDNEEARNDLRRPFIHTGSWYRMGSRQSSMMGSSQVIRDSSISVLACVLIVALGPIQFGFTCGYSSPTQAAITKDLGLTVSEYSVFGSLSNVGAMVGAIASGQIAEYIGRKGSLMIAAIPNIIGWLCISFAKDTSFLYMGRLLEGFGVGIISYTVPVYIAEIAPQNMRGGLGSVNQLSVTIGIMLAYLLGLFVPWRILAVLGILPCTLLIPGLFFIPESPRWLAKMGMTDEFETSLQVLRGFETDITVEVNEIKRSVASSTKRNTVRFVDLKRRRYYFPLMVGIGLLVLQQLGGINGVLFYSSTIFESAGVTSSNAATFGVGAIQVVATAISTWLVDKAGRRLLLTISSVGMTISLVIVAAAFYLKEFVSPDSDMYSWLSILSVVGVVAMVVFFSLGMGPIPWLIMSEILPVNIKGLAGSIATLANWFFSWLITMTANLLLAWSSGGTFTLYGLVCAFTVVFVTLWVPETKGKTLEELQSLFR</sequence>
<comment type="function">
    <text evidence="3">Sugar transporter.</text>
</comment>
<comment type="subcellular location">
    <subcellularLocation>
        <location evidence="1">Membrane</location>
        <topology evidence="1">Multi-pass membrane protein</topology>
    </subcellularLocation>
</comment>
<comment type="similarity">
    <text evidence="3">Belongs to the major facilitator superfamily. Sugar transporter (TC 2.A.1.1) family.</text>
</comment>